<reference key="1">
    <citation type="journal article" date="2004" name="Nucleic Acids Res.">
        <title>The genome sequence of Bacillus cereus ATCC 10987 reveals metabolic adaptations and a large plasmid related to Bacillus anthracis pXO1.</title>
        <authorList>
            <person name="Rasko D.A."/>
            <person name="Ravel J."/>
            <person name="Oekstad O.A."/>
            <person name="Helgason E."/>
            <person name="Cer R.Z."/>
            <person name="Jiang L."/>
            <person name="Shores K.A."/>
            <person name="Fouts D.E."/>
            <person name="Tourasse N.J."/>
            <person name="Angiuoli S.V."/>
            <person name="Kolonay J.F."/>
            <person name="Nelson W.C."/>
            <person name="Kolstoe A.-B."/>
            <person name="Fraser C.M."/>
            <person name="Read T.D."/>
        </authorList>
    </citation>
    <scope>NUCLEOTIDE SEQUENCE [LARGE SCALE GENOMIC DNA]</scope>
    <source>
        <strain>ATCC 10987 / NRS 248</strain>
    </source>
</reference>
<dbReference type="EC" id="4.4.1.21" evidence="1"/>
<dbReference type="EMBL" id="AE017194">
    <property type="protein sequence ID" value="AAS43847.1"/>
    <property type="molecule type" value="Genomic_DNA"/>
</dbReference>
<dbReference type="SMR" id="Q72YS4"/>
<dbReference type="KEGG" id="bca:BCE_4946"/>
<dbReference type="HOGENOM" id="CLU_107531_2_0_9"/>
<dbReference type="Proteomes" id="UP000002527">
    <property type="component" value="Chromosome"/>
</dbReference>
<dbReference type="GO" id="GO:0005506">
    <property type="term" value="F:iron ion binding"/>
    <property type="evidence" value="ECO:0007669"/>
    <property type="project" value="InterPro"/>
</dbReference>
<dbReference type="GO" id="GO:0043768">
    <property type="term" value="F:S-ribosylhomocysteine lyase activity"/>
    <property type="evidence" value="ECO:0007669"/>
    <property type="project" value="UniProtKB-UniRule"/>
</dbReference>
<dbReference type="GO" id="GO:0009372">
    <property type="term" value="P:quorum sensing"/>
    <property type="evidence" value="ECO:0007669"/>
    <property type="project" value="UniProtKB-UniRule"/>
</dbReference>
<dbReference type="Gene3D" id="3.30.1360.80">
    <property type="entry name" value="S-ribosylhomocysteinase (LuxS)"/>
    <property type="match status" value="1"/>
</dbReference>
<dbReference type="HAMAP" id="MF_00091">
    <property type="entry name" value="LuxS"/>
    <property type="match status" value="1"/>
</dbReference>
<dbReference type="InterPro" id="IPR037005">
    <property type="entry name" value="LuxS_sf"/>
</dbReference>
<dbReference type="InterPro" id="IPR011249">
    <property type="entry name" value="Metalloenz_LuxS/M16"/>
</dbReference>
<dbReference type="InterPro" id="IPR003815">
    <property type="entry name" value="S-ribosylhomocysteinase"/>
</dbReference>
<dbReference type="NCBIfam" id="NF002603">
    <property type="entry name" value="PRK02260.1-3"/>
    <property type="match status" value="1"/>
</dbReference>
<dbReference type="PANTHER" id="PTHR35799">
    <property type="entry name" value="S-RIBOSYLHOMOCYSTEINE LYASE"/>
    <property type="match status" value="1"/>
</dbReference>
<dbReference type="PANTHER" id="PTHR35799:SF1">
    <property type="entry name" value="S-RIBOSYLHOMOCYSTEINE LYASE"/>
    <property type="match status" value="1"/>
</dbReference>
<dbReference type="Pfam" id="PF02664">
    <property type="entry name" value="LuxS"/>
    <property type="match status" value="1"/>
</dbReference>
<dbReference type="PIRSF" id="PIRSF006160">
    <property type="entry name" value="AI2"/>
    <property type="match status" value="1"/>
</dbReference>
<dbReference type="PRINTS" id="PR01487">
    <property type="entry name" value="LUXSPROTEIN"/>
</dbReference>
<dbReference type="SUPFAM" id="SSF63411">
    <property type="entry name" value="LuxS/MPP-like metallohydrolase"/>
    <property type="match status" value="1"/>
</dbReference>
<feature type="chain" id="PRO_0000172205" description="S-ribosylhomocysteine lyase">
    <location>
        <begin position="1"/>
        <end position="157"/>
    </location>
</feature>
<feature type="binding site" evidence="1">
    <location>
        <position position="54"/>
    </location>
    <ligand>
        <name>Fe cation</name>
        <dbReference type="ChEBI" id="CHEBI:24875"/>
    </ligand>
</feature>
<feature type="binding site" evidence="1">
    <location>
        <position position="58"/>
    </location>
    <ligand>
        <name>Fe cation</name>
        <dbReference type="ChEBI" id="CHEBI:24875"/>
    </ligand>
</feature>
<feature type="binding site" evidence="1">
    <location>
        <position position="126"/>
    </location>
    <ligand>
        <name>Fe cation</name>
        <dbReference type="ChEBI" id="CHEBI:24875"/>
    </ligand>
</feature>
<gene>
    <name evidence="1" type="primary">luxS</name>
    <name type="ordered locus">BCE_4946</name>
</gene>
<comment type="function">
    <text evidence="1">Involved in the synthesis of autoinducer 2 (AI-2) which is secreted by bacteria and is used to communicate both the cell density and the metabolic potential of the environment. The regulation of gene expression in response to changes in cell density is called quorum sensing. Catalyzes the transformation of S-ribosylhomocysteine (RHC) to homocysteine (HC) and 4,5-dihydroxy-2,3-pentadione (DPD).</text>
</comment>
<comment type="catalytic activity">
    <reaction evidence="1">
        <text>S-(5-deoxy-D-ribos-5-yl)-L-homocysteine = (S)-4,5-dihydroxypentane-2,3-dione + L-homocysteine</text>
        <dbReference type="Rhea" id="RHEA:17753"/>
        <dbReference type="ChEBI" id="CHEBI:29484"/>
        <dbReference type="ChEBI" id="CHEBI:58195"/>
        <dbReference type="ChEBI" id="CHEBI:58199"/>
        <dbReference type="EC" id="4.4.1.21"/>
    </reaction>
</comment>
<comment type="cofactor">
    <cofactor evidence="1">
        <name>Fe cation</name>
        <dbReference type="ChEBI" id="CHEBI:24875"/>
    </cofactor>
    <text evidence="1">Binds 1 Fe cation per subunit.</text>
</comment>
<comment type="subunit">
    <text evidence="1">Homodimer.</text>
</comment>
<comment type="similarity">
    <text evidence="1">Belongs to the LuxS family.</text>
</comment>
<keyword id="KW-0071">Autoinducer synthesis</keyword>
<keyword id="KW-0408">Iron</keyword>
<keyword id="KW-0456">Lyase</keyword>
<keyword id="KW-0479">Metal-binding</keyword>
<keyword id="KW-0673">Quorum sensing</keyword>
<evidence type="ECO:0000255" key="1">
    <source>
        <dbReference type="HAMAP-Rule" id="MF_00091"/>
    </source>
</evidence>
<organism>
    <name type="scientific">Bacillus cereus (strain ATCC 10987 / NRS 248)</name>
    <dbReference type="NCBI Taxonomy" id="222523"/>
    <lineage>
        <taxon>Bacteria</taxon>
        <taxon>Bacillati</taxon>
        <taxon>Bacillota</taxon>
        <taxon>Bacilli</taxon>
        <taxon>Bacillales</taxon>
        <taxon>Bacillaceae</taxon>
        <taxon>Bacillus</taxon>
        <taxon>Bacillus cereus group</taxon>
    </lineage>
</organism>
<accession>Q72YS4</accession>
<name>LUXS_BACC1</name>
<protein>
    <recommendedName>
        <fullName evidence="1">S-ribosylhomocysteine lyase</fullName>
        <ecNumber evidence="1">4.4.1.21</ecNumber>
    </recommendedName>
    <alternativeName>
        <fullName evidence="1">AI-2 synthesis protein</fullName>
    </alternativeName>
    <alternativeName>
        <fullName evidence="1">Autoinducer-2 production protein LuxS</fullName>
    </alternativeName>
</protein>
<proteinExistence type="inferred from homology"/>
<sequence>MPSVESFELDHTIVKAPYVRHCGVHNVGSDGIVNKFDIRFCQPNKQAMKPDVIHTLEHLLAFNLRKYIDRYPHFDIIDISPMGCQTGYYLVVSGTPTVREIIDLLELTLKDAVQITEIPAANETQCGQAKLHDLEGAKRLMNFWLSQDKDELEKVFG</sequence>